<accession>P0C8F0</accession>
<accession>P77038</accession>
<organism>
    <name type="scientific">Escherichia coli</name>
    <dbReference type="NCBI Taxonomy" id="562"/>
    <lineage>
        <taxon>Bacteria</taxon>
        <taxon>Pseudomonadati</taxon>
        <taxon>Pseudomonadota</taxon>
        <taxon>Gammaproteobacteria</taxon>
        <taxon>Enterobacterales</taxon>
        <taxon>Enterobacteriaceae</taxon>
        <taxon>Escherichia</taxon>
    </lineage>
</organism>
<feature type="signal peptide" evidence="1">
    <location>
        <begin position="1"/>
        <end position="23"/>
    </location>
</feature>
<feature type="chain" id="PRO_5000146557" description="Catalase-peroxidase">
    <location>
        <begin position="24"/>
        <end position="736"/>
    </location>
</feature>
<feature type="active site" description="Proton acceptor" evidence="1">
    <location>
        <position position="103"/>
    </location>
</feature>
<feature type="binding site" description="axial binding residue" evidence="1">
    <location>
        <position position="264"/>
    </location>
    <ligand>
        <name>heme b</name>
        <dbReference type="ChEBI" id="CHEBI:60344"/>
    </ligand>
    <ligandPart>
        <name>Fe</name>
        <dbReference type="ChEBI" id="CHEBI:18248"/>
    </ligandPart>
</feature>
<feature type="site" description="Transition state stabilizer" evidence="1">
    <location>
        <position position="99"/>
    </location>
</feature>
<feature type="cross-link" description="Tryptophyl-tyrosyl-methioninium (Trp-Tyr) (with M-249)" evidence="1">
    <location>
        <begin position="102"/>
        <end position="223"/>
    </location>
</feature>
<feature type="cross-link" description="Tryptophyl-tyrosyl-methioninium (Tyr-Met) (with W-102)" evidence="1">
    <location>
        <begin position="223"/>
        <end position="249"/>
    </location>
</feature>
<proteinExistence type="inferred from homology"/>
<keyword id="KW-0349">Heme</keyword>
<keyword id="KW-0376">Hydrogen peroxide</keyword>
<keyword id="KW-0408">Iron</keyword>
<keyword id="KW-0479">Metal-binding</keyword>
<keyword id="KW-0560">Oxidoreductase</keyword>
<keyword id="KW-0575">Peroxidase</keyword>
<keyword id="KW-0614">Plasmid</keyword>
<keyword id="KW-0732">Signal</keyword>
<protein>
    <recommendedName>
        <fullName evidence="1">Catalase-peroxidase</fullName>
        <shortName evidence="1">CP</shortName>
        <ecNumber evidence="1">1.11.1.21</ecNumber>
    </recommendedName>
    <alternativeName>
        <fullName evidence="1">Peroxidase/catalase</fullName>
    </alternativeName>
</protein>
<sequence>MIKKTLPVLILLALSGSFSTAVAADKKETQNFYYPETLDLTPLRLHSPESNPWGADFDYATRFQQLDMEALKKDIKDLLTTSQDWWPADYGHYGPFFIRMAWHGAGTYRTYDGRGGASGGQQRFEPLNSWPDNVNLDKARRLLWPVKKKYGSSISWGDLMVLTGNVALESMGFKTLGFAGGREDDWESDLVYWGPDNKPLADNRDKNGKLQKPLAATQMGLIYVNPEGPGGKPDPLASAKDIREAFSRMAMDDEETVALIAGGHTFGKAHGAASPEKCIGAGPDGAPVEEQGLGWKNKCGTGNGKYTITSGLEGAWSTSPTQFTMQYLKNLYKYEWELHKSPAGAYQWKPKKAANIVQDAHDPSVLHPLMMFTTDIALKVDPEYKKITTRFLNDPKAFEQAFARAWFKLTHRDMGPAARYLGNEVPAESFIWQDPLPAADYTMIDGKDIKSLKEQVMDLGIPASELIKTAWASASTFRVTDYRGGNNGARIRLQPEINWEVNEPEKLKKVLASLTSLQREFNKKQSDGKKVSLADLIVLSGNAAIEDAARKAGVELEIPFTPGRTDASQEQTDVASFSVLEPTADGFRNYYSKSRSHISPVESLIDKASQLDLTVPEMTALLGGLRVMDINTNNSSLGVFTDTPGVLDNKFFVNLLDMSTRWSKADKEDTYNGFDRKTGALKWKASSVDLIFSSNPELRAVAEVYASDDARNKFIHDFVKSWNKVMNSDRFDLNNK</sequence>
<geneLocation type="plasmid">
    <name>pO103</name>
</geneLocation>
<comment type="function">
    <text evidence="1">Bifunctional enzyme with both catalase and broad-spectrum peroxidase activity.</text>
</comment>
<comment type="catalytic activity">
    <reaction evidence="1">
        <text>H2O2 + AH2 = A + 2 H2O</text>
        <dbReference type="Rhea" id="RHEA:30275"/>
        <dbReference type="ChEBI" id="CHEBI:13193"/>
        <dbReference type="ChEBI" id="CHEBI:15377"/>
        <dbReference type="ChEBI" id="CHEBI:16240"/>
        <dbReference type="ChEBI" id="CHEBI:17499"/>
        <dbReference type="EC" id="1.11.1.21"/>
    </reaction>
</comment>
<comment type="catalytic activity">
    <reaction evidence="1">
        <text>2 H2O2 = O2 + 2 H2O</text>
        <dbReference type="Rhea" id="RHEA:20309"/>
        <dbReference type="ChEBI" id="CHEBI:15377"/>
        <dbReference type="ChEBI" id="CHEBI:15379"/>
        <dbReference type="ChEBI" id="CHEBI:16240"/>
        <dbReference type="EC" id="1.11.1.21"/>
    </reaction>
</comment>
<comment type="cofactor">
    <cofactor evidence="1">
        <name>heme b</name>
        <dbReference type="ChEBI" id="CHEBI:60344"/>
    </cofactor>
    <text evidence="1">Binds 1 heme b (iron(II)-protoporphyrin IX) group per dimer.</text>
</comment>
<comment type="subunit">
    <text evidence="1">Homodimer or homotetramer.</text>
</comment>
<comment type="PTM">
    <text evidence="1">Formation of the three residue Trp-Tyr-Met cross-link is important for the catalase, but not the peroxidase activity of the enzyme.</text>
</comment>
<comment type="similarity">
    <text evidence="1">Belongs to the peroxidase family. Peroxidase/catalase subfamily.</text>
</comment>
<dbReference type="EC" id="1.11.1.21" evidence="1"/>
<dbReference type="EMBL" id="AJ243564">
    <property type="protein sequence ID" value="CAC80498.1"/>
    <property type="molecule type" value="Genomic_DNA"/>
</dbReference>
<dbReference type="RefSeq" id="WP_000592771.1">
    <property type="nucleotide sequence ID" value="NZ_WSWV01000078.1"/>
</dbReference>
<dbReference type="RefSeq" id="YP_002756743.1">
    <property type="nucleotide sequence ID" value="NC_012487.1"/>
</dbReference>
<dbReference type="SMR" id="P0C8F0"/>
<dbReference type="OMA" id="EIFWGPE"/>
<dbReference type="GO" id="GO:0005829">
    <property type="term" value="C:cytosol"/>
    <property type="evidence" value="ECO:0007669"/>
    <property type="project" value="TreeGrafter"/>
</dbReference>
<dbReference type="GO" id="GO:0004096">
    <property type="term" value="F:catalase activity"/>
    <property type="evidence" value="ECO:0007669"/>
    <property type="project" value="UniProtKB-UniRule"/>
</dbReference>
<dbReference type="GO" id="GO:0020037">
    <property type="term" value="F:heme binding"/>
    <property type="evidence" value="ECO:0007669"/>
    <property type="project" value="InterPro"/>
</dbReference>
<dbReference type="GO" id="GO:0046872">
    <property type="term" value="F:metal ion binding"/>
    <property type="evidence" value="ECO:0007669"/>
    <property type="project" value="UniProtKB-KW"/>
</dbReference>
<dbReference type="GO" id="GO:0070301">
    <property type="term" value="P:cellular response to hydrogen peroxide"/>
    <property type="evidence" value="ECO:0007669"/>
    <property type="project" value="TreeGrafter"/>
</dbReference>
<dbReference type="GO" id="GO:0042744">
    <property type="term" value="P:hydrogen peroxide catabolic process"/>
    <property type="evidence" value="ECO:0007669"/>
    <property type="project" value="UniProtKB-KW"/>
</dbReference>
<dbReference type="CDD" id="cd00649">
    <property type="entry name" value="catalase_peroxidase_1"/>
    <property type="match status" value="1"/>
</dbReference>
<dbReference type="CDD" id="cd08200">
    <property type="entry name" value="catalase_peroxidase_2"/>
    <property type="match status" value="1"/>
</dbReference>
<dbReference type="FunFam" id="1.10.420.10:FF:000004">
    <property type="entry name" value="Catalase-peroxidase"/>
    <property type="match status" value="1"/>
</dbReference>
<dbReference type="FunFam" id="1.10.520.10:FF:000002">
    <property type="entry name" value="Catalase-peroxidase"/>
    <property type="match status" value="1"/>
</dbReference>
<dbReference type="Gene3D" id="1.10.520.10">
    <property type="match status" value="2"/>
</dbReference>
<dbReference type="Gene3D" id="1.10.420.10">
    <property type="entry name" value="Peroxidase, domain 2"/>
    <property type="match status" value="2"/>
</dbReference>
<dbReference type="HAMAP" id="MF_01961">
    <property type="entry name" value="Catal_peroxid"/>
    <property type="match status" value="1"/>
</dbReference>
<dbReference type="InterPro" id="IPR000763">
    <property type="entry name" value="Catalase_peroxidase"/>
</dbReference>
<dbReference type="InterPro" id="IPR002016">
    <property type="entry name" value="Haem_peroxidase"/>
</dbReference>
<dbReference type="InterPro" id="IPR010255">
    <property type="entry name" value="Haem_peroxidase_sf"/>
</dbReference>
<dbReference type="InterPro" id="IPR019794">
    <property type="entry name" value="Peroxidases_AS"/>
</dbReference>
<dbReference type="InterPro" id="IPR019793">
    <property type="entry name" value="Peroxidases_heam-ligand_BS"/>
</dbReference>
<dbReference type="NCBIfam" id="TIGR00198">
    <property type="entry name" value="cat_per_HPI"/>
    <property type="match status" value="1"/>
</dbReference>
<dbReference type="NCBIfam" id="NF011635">
    <property type="entry name" value="PRK15061.1"/>
    <property type="match status" value="1"/>
</dbReference>
<dbReference type="PANTHER" id="PTHR30555:SF0">
    <property type="entry name" value="CATALASE-PEROXIDASE"/>
    <property type="match status" value="1"/>
</dbReference>
<dbReference type="PANTHER" id="PTHR30555">
    <property type="entry name" value="HYDROPEROXIDASE I, BIFUNCTIONAL CATALASE-PEROXIDASE"/>
    <property type="match status" value="1"/>
</dbReference>
<dbReference type="Pfam" id="PF00141">
    <property type="entry name" value="peroxidase"/>
    <property type="match status" value="2"/>
</dbReference>
<dbReference type="PRINTS" id="PR00460">
    <property type="entry name" value="BPEROXIDASE"/>
</dbReference>
<dbReference type="PRINTS" id="PR00458">
    <property type="entry name" value="PEROXIDASE"/>
</dbReference>
<dbReference type="SUPFAM" id="SSF48113">
    <property type="entry name" value="Heme-dependent peroxidases"/>
    <property type="match status" value="2"/>
</dbReference>
<dbReference type="PROSITE" id="PS00435">
    <property type="entry name" value="PEROXIDASE_1"/>
    <property type="match status" value="1"/>
</dbReference>
<dbReference type="PROSITE" id="PS00436">
    <property type="entry name" value="PEROXIDASE_2"/>
    <property type="match status" value="1"/>
</dbReference>
<dbReference type="PROSITE" id="PS50873">
    <property type="entry name" value="PEROXIDASE_4"/>
    <property type="match status" value="1"/>
</dbReference>
<name>KATG_ECOLX</name>
<gene>
    <name evidence="1" type="primary">katG</name>
    <name type="synonym">katP</name>
</gene>
<evidence type="ECO:0000255" key="1">
    <source>
        <dbReference type="HAMAP-Rule" id="MF_01961"/>
    </source>
</evidence>
<reference key="1">
    <citation type="submission" date="1999-07" db="EMBL/GenBank/DDBJ databases">
        <title>The large plasmid of enterohemorrhagic Escherichia coli (EHEC) O103:H2.</title>
        <authorList>
            <person name="Brunder W."/>
            <person name="Ripke I."/>
        </authorList>
    </citation>
    <scope>NUCLEOTIDE SEQUENCE [GENOMIC DNA]</scope>
    <source>
        <strain>O103:H2 / 5714/96 / EHEC</strain>
    </source>
</reference>